<keyword id="KW-0012">Acyltransferase</keyword>
<keyword id="KW-0133">Cell shape</keyword>
<keyword id="KW-0961">Cell wall biogenesis/degradation</keyword>
<keyword id="KW-0963">Cytoplasm</keyword>
<keyword id="KW-0460">Magnesium</keyword>
<keyword id="KW-0479">Metal-binding</keyword>
<keyword id="KW-0511">Multifunctional enzyme</keyword>
<keyword id="KW-0548">Nucleotidyltransferase</keyword>
<keyword id="KW-0573">Peptidoglycan synthesis</keyword>
<keyword id="KW-0677">Repeat</keyword>
<keyword id="KW-0808">Transferase</keyword>
<protein>
    <recommendedName>
        <fullName evidence="1">Bifunctional protein GlmU</fullName>
    </recommendedName>
    <domain>
        <recommendedName>
            <fullName evidence="1">UDP-N-acetylglucosamine pyrophosphorylase</fullName>
            <ecNumber evidence="1">2.7.7.23</ecNumber>
        </recommendedName>
        <alternativeName>
            <fullName evidence="1">N-acetylglucosamine-1-phosphate uridyltransferase</fullName>
        </alternativeName>
    </domain>
    <domain>
        <recommendedName>
            <fullName evidence="1">Glucosamine-1-phosphate N-acetyltransferase</fullName>
            <ecNumber evidence="1">2.3.1.157</ecNumber>
        </recommendedName>
    </domain>
</protein>
<accession>Q3K443</accession>
<proteinExistence type="inferred from homology"/>
<comment type="function">
    <text evidence="1">Catalyzes the last two sequential reactions in the de novo biosynthetic pathway for UDP-N-acetylglucosamine (UDP-GlcNAc). The C-terminal domain catalyzes the transfer of acetyl group from acetyl coenzyme A to glucosamine-1-phosphate (GlcN-1-P) to produce N-acetylglucosamine-1-phosphate (GlcNAc-1-P), which is converted into UDP-GlcNAc by the transfer of uridine 5-monophosphate (from uridine 5-triphosphate), a reaction catalyzed by the N-terminal domain.</text>
</comment>
<comment type="catalytic activity">
    <reaction evidence="1">
        <text>alpha-D-glucosamine 1-phosphate + acetyl-CoA = N-acetyl-alpha-D-glucosamine 1-phosphate + CoA + H(+)</text>
        <dbReference type="Rhea" id="RHEA:13725"/>
        <dbReference type="ChEBI" id="CHEBI:15378"/>
        <dbReference type="ChEBI" id="CHEBI:57287"/>
        <dbReference type="ChEBI" id="CHEBI:57288"/>
        <dbReference type="ChEBI" id="CHEBI:57776"/>
        <dbReference type="ChEBI" id="CHEBI:58516"/>
        <dbReference type="EC" id="2.3.1.157"/>
    </reaction>
</comment>
<comment type="catalytic activity">
    <reaction evidence="1">
        <text>N-acetyl-alpha-D-glucosamine 1-phosphate + UTP + H(+) = UDP-N-acetyl-alpha-D-glucosamine + diphosphate</text>
        <dbReference type="Rhea" id="RHEA:13509"/>
        <dbReference type="ChEBI" id="CHEBI:15378"/>
        <dbReference type="ChEBI" id="CHEBI:33019"/>
        <dbReference type="ChEBI" id="CHEBI:46398"/>
        <dbReference type="ChEBI" id="CHEBI:57705"/>
        <dbReference type="ChEBI" id="CHEBI:57776"/>
        <dbReference type="EC" id="2.7.7.23"/>
    </reaction>
</comment>
<comment type="cofactor">
    <cofactor evidence="1">
        <name>Mg(2+)</name>
        <dbReference type="ChEBI" id="CHEBI:18420"/>
    </cofactor>
    <text evidence="1">Binds 1 Mg(2+) ion per subunit.</text>
</comment>
<comment type="pathway">
    <text evidence="1">Nucleotide-sugar biosynthesis; UDP-N-acetyl-alpha-D-glucosamine biosynthesis; N-acetyl-alpha-D-glucosamine 1-phosphate from alpha-D-glucosamine 6-phosphate (route II): step 2/2.</text>
</comment>
<comment type="pathway">
    <text evidence="1">Nucleotide-sugar biosynthesis; UDP-N-acetyl-alpha-D-glucosamine biosynthesis; UDP-N-acetyl-alpha-D-glucosamine from N-acetyl-alpha-D-glucosamine 1-phosphate: step 1/1.</text>
</comment>
<comment type="pathway">
    <text evidence="1">Bacterial outer membrane biogenesis; LPS lipid A biosynthesis.</text>
</comment>
<comment type="subunit">
    <text evidence="1">Homotrimer.</text>
</comment>
<comment type="subcellular location">
    <subcellularLocation>
        <location evidence="1">Cytoplasm</location>
    </subcellularLocation>
</comment>
<comment type="similarity">
    <text evidence="1">In the N-terminal section; belongs to the N-acetylglucosamine-1-phosphate uridyltransferase family.</text>
</comment>
<comment type="similarity">
    <text evidence="1">In the C-terminal section; belongs to the transferase hexapeptide repeat family.</text>
</comment>
<dbReference type="EC" id="2.7.7.23" evidence="1"/>
<dbReference type="EC" id="2.3.1.157" evidence="1"/>
<dbReference type="EMBL" id="CP000094">
    <property type="protein sequence ID" value="ABA77461.1"/>
    <property type="molecule type" value="Genomic_DNA"/>
</dbReference>
<dbReference type="RefSeq" id="WP_011336715.1">
    <property type="nucleotide sequence ID" value="NC_007492.2"/>
</dbReference>
<dbReference type="SMR" id="Q3K443"/>
<dbReference type="KEGG" id="pfo:Pfl01_5728"/>
<dbReference type="eggNOG" id="COG1207">
    <property type="taxonomic scope" value="Bacteria"/>
</dbReference>
<dbReference type="HOGENOM" id="CLU_029499_15_2_6"/>
<dbReference type="UniPathway" id="UPA00113">
    <property type="reaction ID" value="UER00532"/>
</dbReference>
<dbReference type="UniPathway" id="UPA00113">
    <property type="reaction ID" value="UER00533"/>
</dbReference>
<dbReference type="UniPathway" id="UPA00973"/>
<dbReference type="Proteomes" id="UP000002704">
    <property type="component" value="Chromosome"/>
</dbReference>
<dbReference type="GO" id="GO:0005737">
    <property type="term" value="C:cytoplasm"/>
    <property type="evidence" value="ECO:0007669"/>
    <property type="project" value="UniProtKB-SubCell"/>
</dbReference>
<dbReference type="GO" id="GO:0016020">
    <property type="term" value="C:membrane"/>
    <property type="evidence" value="ECO:0007669"/>
    <property type="project" value="GOC"/>
</dbReference>
<dbReference type="GO" id="GO:0019134">
    <property type="term" value="F:glucosamine-1-phosphate N-acetyltransferase activity"/>
    <property type="evidence" value="ECO:0007669"/>
    <property type="project" value="UniProtKB-UniRule"/>
</dbReference>
<dbReference type="GO" id="GO:0000287">
    <property type="term" value="F:magnesium ion binding"/>
    <property type="evidence" value="ECO:0007669"/>
    <property type="project" value="UniProtKB-UniRule"/>
</dbReference>
<dbReference type="GO" id="GO:0003977">
    <property type="term" value="F:UDP-N-acetylglucosamine diphosphorylase activity"/>
    <property type="evidence" value="ECO:0007669"/>
    <property type="project" value="UniProtKB-UniRule"/>
</dbReference>
<dbReference type="GO" id="GO:0000902">
    <property type="term" value="P:cell morphogenesis"/>
    <property type="evidence" value="ECO:0007669"/>
    <property type="project" value="UniProtKB-UniRule"/>
</dbReference>
<dbReference type="GO" id="GO:0071555">
    <property type="term" value="P:cell wall organization"/>
    <property type="evidence" value="ECO:0007669"/>
    <property type="project" value="UniProtKB-KW"/>
</dbReference>
<dbReference type="GO" id="GO:0009245">
    <property type="term" value="P:lipid A biosynthetic process"/>
    <property type="evidence" value="ECO:0007669"/>
    <property type="project" value="UniProtKB-UniRule"/>
</dbReference>
<dbReference type="GO" id="GO:0009252">
    <property type="term" value="P:peptidoglycan biosynthetic process"/>
    <property type="evidence" value="ECO:0007669"/>
    <property type="project" value="UniProtKB-UniRule"/>
</dbReference>
<dbReference type="GO" id="GO:0008360">
    <property type="term" value="P:regulation of cell shape"/>
    <property type="evidence" value="ECO:0007669"/>
    <property type="project" value="UniProtKB-KW"/>
</dbReference>
<dbReference type="GO" id="GO:0006048">
    <property type="term" value="P:UDP-N-acetylglucosamine biosynthetic process"/>
    <property type="evidence" value="ECO:0007669"/>
    <property type="project" value="UniProtKB-UniPathway"/>
</dbReference>
<dbReference type="CDD" id="cd02540">
    <property type="entry name" value="GT2_GlmU_N_bac"/>
    <property type="match status" value="1"/>
</dbReference>
<dbReference type="CDD" id="cd03353">
    <property type="entry name" value="LbH_GlmU_C"/>
    <property type="match status" value="1"/>
</dbReference>
<dbReference type="Gene3D" id="2.160.10.10">
    <property type="entry name" value="Hexapeptide repeat proteins"/>
    <property type="match status" value="1"/>
</dbReference>
<dbReference type="Gene3D" id="3.90.550.10">
    <property type="entry name" value="Spore Coat Polysaccharide Biosynthesis Protein SpsA, Chain A"/>
    <property type="match status" value="1"/>
</dbReference>
<dbReference type="HAMAP" id="MF_01631">
    <property type="entry name" value="GlmU"/>
    <property type="match status" value="1"/>
</dbReference>
<dbReference type="InterPro" id="IPR005882">
    <property type="entry name" value="Bifunctional_GlmU"/>
</dbReference>
<dbReference type="InterPro" id="IPR050065">
    <property type="entry name" value="GlmU-like"/>
</dbReference>
<dbReference type="InterPro" id="IPR038009">
    <property type="entry name" value="GlmU_C_LbH"/>
</dbReference>
<dbReference type="InterPro" id="IPR001451">
    <property type="entry name" value="Hexapep"/>
</dbReference>
<dbReference type="InterPro" id="IPR025877">
    <property type="entry name" value="MobA-like_NTP_Trfase"/>
</dbReference>
<dbReference type="InterPro" id="IPR029044">
    <property type="entry name" value="Nucleotide-diphossugar_trans"/>
</dbReference>
<dbReference type="InterPro" id="IPR011004">
    <property type="entry name" value="Trimer_LpxA-like_sf"/>
</dbReference>
<dbReference type="NCBIfam" id="TIGR01173">
    <property type="entry name" value="glmU"/>
    <property type="match status" value="1"/>
</dbReference>
<dbReference type="PANTHER" id="PTHR43584:SF3">
    <property type="entry name" value="BIFUNCTIONAL PROTEIN GLMU"/>
    <property type="match status" value="1"/>
</dbReference>
<dbReference type="PANTHER" id="PTHR43584">
    <property type="entry name" value="NUCLEOTIDYL TRANSFERASE"/>
    <property type="match status" value="1"/>
</dbReference>
<dbReference type="Pfam" id="PF00132">
    <property type="entry name" value="Hexapep"/>
    <property type="match status" value="1"/>
</dbReference>
<dbReference type="Pfam" id="PF14602">
    <property type="entry name" value="Hexapep_2"/>
    <property type="match status" value="1"/>
</dbReference>
<dbReference type="Pfam" id="PF12804">
    <property type="entry name" value="NTP_transf_3"/>
    <property type="match status" value="1"/>
</dbReference>
<dbReference type="SUPFAM" id="SSF53448">
    <property type="entry name" value="Nucleotide-diphospho-sugar transferases"/>
    <property type="match status" value="1"/>
</dbReference>
<dbReference type="SUPFAM" id="SSF51161">
    <property type="entry name" value="Trimeric LpxA-like enzymes"/>
    <property type="match status" value="1"/>
</dbReference>
<organism>
    <name type="scientific">Pseudomonas fluorescens (strain Pf0-1)</name>
    <dbReference type="NCBI Taxonomy" id="205922"/>
    <lineage>
        <taxon>Bacteria</taxon>
        <taxon>Pseudomonadati</taxon>
        <taxon>Pseudomonadota</taxon>
        <taxon>Gammaproteobacteria</taxon>
        <taxon>Pseudomonadales</taxon>
        <taxon>Pseudomonadaceae</taxon>
        <taxon>Pseudomonas</taxon>
    </lineage>
</organism>
<evidence type="ECO:0000255" key="1">
    <source>
        <dbReference type="HAMAP-Rule" id="MF_01631"/>
    </source>
</evidence>
<sequence length="455" mass="48814">MSLEIVILAAGQGTRMRSALPKVLHPIAGDSMLGHVIHSARQLDPQRIHVVIGHGADVVRERLAADDLNFVLQDKQLGTGHATAQAVPFITADTVLILYGDVPLIEVETLQRLLKHVVPGQMGLLTVELDDPTGYGRIVRDADGKVAAIVEHKDASEAQRAITEGNTGILAVPANRLADWMSRLSNNNAQGEYYLTDVIEMAVSDGLTVATEQPHDPMEVQGANDRKQLSELERHYQLRAGRRLMAQGVTLRDPARFDVRGEVTVGRDVLIDINVILEGKVVIEDDVVIGPNCVIKDSTLRKGVVIKANSHIEGAVLGEGSDAGPFARLRPGTVLEARAHVGNFVELKNARMGEGAKAGHLTYLGDAEIGARTNIGAGTITCNYDGANKWKTVLGEDVFIGSNNSLVAPVDISAGATTAAGSTITQNVENSQLAVGRARQKNIDGWKRPEKIKKN</sequence>
<feature type="chain" id="PRO_0000233823" description="Bifunctional protein GlmU">
    <location>
        <begin position="1"/>
        <end position="455"/>
    </location>
</feature>
<feature type="region of interest" description="Pyrophosphorylase" evidence="1">
    <location>
        <begin position="1"/>
        <end position="226"/>
    </location>
</feature>
<feature type="region of interest" description="Linker" evidence="1">
    <location>
        <begin position="227"/>
        <end position="247"/>
    </location>
</feature>
<feature type="region of interest" description="N-acetyltransferase" evidence="1">
    <location>
        <begin position="248"/>
        <end position="455"/>
    </location>
</feature>
<feature type="active site" description="Proton acceptor" evidence="1">
    <location>
        <position position="360"/>
    </location>
</feature>
<feature type="binding site" evidence="1">
    <location>
        <begin position="8"/>
        <end position="11"/>
    </location>
    <ligand>
        <name>UDP-N-acetyl-alpha-D-glucosamine</name>
        <dbReference type="ChEBI" id="CHEBI:57705"/>
    </ligand>
</feature>
<feature type="binding site" evidence="1">
    <location>
        <position position="22"/>
    </location>
    <ligand>
        <name>UDP-N-acetyl-alpha-D-glucosamine</name>
        <dbReference type="ChEBI" id="CHEBI:57705"/>
    </ligand>
</feature>
<feature type="binding site" evidence="1">
    <location>
        <position position="73"/>
    </location>
    <ligand>
        <name>UDP-N-acetyl-alpha-D-glucosamine</name>
        <dbReference type="ChEBI" id="CHEBI:57705"/>
    </ligand>
</feature>
<feature type="binding site" evidence="1">
    <location>
        <begin position="78"/>
        <end position="79"/>
    </location>
    <ligand>
        <name>UDP-N-acetyl-alpha-D-glucosamine</name>
        <dbReference type="ChEBI" id="CHEBI:57705"/>
    </ligand>
</feature>
<feature type="binding site" evidence="1">
    <location>
        <begin position="99"/>
        <end position="101"/>
    </location>
    <ligand>
        <name>UDP-N-acetyl-alpha-D-glucosamine</name>
        <dbReference type="ChEBI" id="CHEBI:57705"/>
    </ligand>
</feature>
<feature type="binding site" evidence="1">
    <location>
        <position position="101"/>
    </location>
    <ligand>
        <name>Mg(2+)</name>
        <dbReference type="ChEBI" id="CHEBI:18420"/>
    </ligand>
</feature>
<feature type="binding site" evidence="1">
    <location>
        <position position="136"/>
    </location>
    <ligand>
        <name>UDP-N-acetyl-alpha-D-glucosamine</name>
        <dbReference type="ChEBI" id="CHEBI:57705"/>
    </ligand>
</feature>
<feature type="binding site" evidence="1">
    <location>
        <position position="151"/>
    </location>
    <ligand>
        <name>UDP-N-acetyl-alpha-D-glucosamine</name>
        <dbReference type="ChEBI" id="CHEBI:57705"/>
    </ligand>
</feature>
<feature type="binding site" evidence="1">
    <location>
        <position position="166"/>
    </location>
    <ligand>
        <name>UDP-N-acetyl-alpha-D-glucosamine</name>
        <dbReference type="ChEBI" id="CHEBI:57705"/>
    </ligand>
</feature>
<feature type="binding site" evidence="1">
    <location>
        <position position="224"/>
    </location>
    <ligand>
        <name>Mg(2+)</name>
        <dbReference type="ChEBI" id="CHEBI:18420"/>
    </ligand>
</feature>
<feature type="binding site" evidence="1">
    <location>
        <position position="224"/>
    </location>
    <ligand>
        <name>UDP-N-acetyl-alpha-D-glucosamine</name>
        <dbReference type="ChEBI" id="CHEBI:57705"/>
    </ligand>
</feature>
<feature type="binding site" evidence="1">
    <location>
        <position position="330"/>
    </location>
    <ligand>
        <name>UDP-N-acetyl-alpha-D-glucosamine</name>
        <dbReference type="ChEBI" id="CHEBI:57705"/>
    </ligand>
</feature>
<feature type="binding site" evidence="1">
    <location>
        <position position="348"/>
    </location>
    <ligand>
        <name>UDP-N-acetyl-alpha-D-glucosamine</name>
        <dbReference type="ChEBI" id="CHEBI:57705"/>
    </ligand>
</feature>
<feature type="binding site" evidence="1">
    <location>
        <position position="363"/>
    </location>
    <ligand>
        <name>UDP-N-acetyl-alpha-D-glucosamine</name>
        <dbReference type="ChEBI" id="CHEBI:57705"/>
    </ligand>
</feature>
<feature type="binding site" evidence="1">
    <location>
        <position position="374"/>
    </location>
    <ligand>
        <name>UDP-N-acetyl-alpha-D-glucosamine</name>
        <dbReference type="ChEBI" id="CHEBI:57705"/>
    </ligand>
</feature>
<feature type="binding site" evidence="1">
    <location>
        <position position="377"/>
    </location>
    <ligand>
        <name>acetyl-CoA</name>
        <dbReference type="ChEBI" id="CHEBI:57288"/>
    </ligand>
</feature>
<feature type="binding site" evidence="1">
    <location>
        <begin position="383"/>
        <end position="384"/>
    </location>
    <ligand>
        <name>acetyl-CoA</name>
        <dbReference type="ChEBI" id="CHEBI:57288"/>
    </ligand>
</feature>
<feature type="binding site" evidence="1">
    <location>
        <position position="402"/>
    </location>
    <ligand>
        <name>acetyl-CoA</name>
        <dbReference type="ChEBI" id="CHEBI:57288"/>
    </ligand>
</feature>
<feature type="binding site" evidence="1">
    <location>
        <position position="420"/>
    </location>
    <ligand>
        <name>acetyl-CoA</name>
        <dbReference type="ChEBI" id="CHEBI:57288"/>
    </ligand>
</feature>
<feature type="binding site" evidence="1">
    <location>
        <position position="437"/>
    </location>
    <ligand>
        <name>acetyl-CoA</name>
        <dbReference type="ChEBI" id="CHEBI:57288"/>
    </ligand>
</feature>
<name>GLMU_PSEPF</name>
<reference key="1">
    <citation type="journal article" date="2009" name="Genome Biol.">
        <title>Genomic and genetic analyses of diversity and plant interactions of Pseudomonas fluorescens.</title>
        <authorList>
            <person name="Silby M.W."/>
            <person name="Cerdeno-Tarraga A.M."/>
            <person name="Vernikos G.S."/>
            <person name="Giddens S.R."/>
            <person name="Jackson R.W."/>
            <person name="Preston G.M."/>
            <person name="Zhang X.-X."/>
            <person name="Moon C.D."/>
            <person name="Gehrig S.M."/>
            <person name="Godfrey S.A.C."/>
            <person name="Knight C.G."/>
            <person name="Malone J.G."/>
            <person name="Robinson Z."/>
            <person name="Spiers A.J."/>
            <person name="Harris S."/>
            <person name="Challis G.L."/>
            <person name="Yaxley A.M."/>
            <person name="Harris D."/>
            <person name="Seeger K."/>
            <person name="Murphy L."/>
            <person name="Rutter S."/>
            <person name="Squares R."/>
            <person name="Quail M.A."/>
            <person name="Saunders E."/>
            <person name="Mavromatis K."/>
            <person name="Brettin T.S."/>
            <person name="Bentley S.D."/>
            <person name="Hothersall J."/>
            <person name="Stephens E."/>
            <person name="Thomas C.M."/>
            <person name="Parkhill J."/>
            <person name="Levy S.B."/>
            <person name="Rainey P.B."/>
            <person name="Thomson N.R."/>
        </authorList>
    </citation>
    <scope>NUCLEOTIDE SEQUENCE [LARGE SCALE GENOMIC DNA]</scope>
    <source>
        <strain>Pf0-1</strain>
    </source>
</reference>
<gene>
    <name evidence="1" type="primary">glmU</name>
    <name type="ordered locus">Pfl01_5728</name>
</gene>